<sequence length="74" mass="8313">MVHPRFVFFAFLALSVLLAVMNEDSILSSNKGDSLCCNDHPEFGICTNKSCNKWCLQGCTRGGFCKRKICHCYC</sequence>
<accession>Q2L6T3</accession>
<name>DEF27_ARATH</name>
<reference key="1">
    <citation type="journal article" date="1999" name="Nature">
        <title>Sequence and analysis of chromosome 4 of the plant Arabidopsis thaliana.</title>
        <authorList>
            <person name="Mayer K.F.X."/>
            <person name="Schueller C."/>
            <person name="Wambutt R."/>
            <person name="Murphy G."/>
            <person name="Volckaert G."/>
            <person name="Pohl T."/>
            <person name="Duesterhoeft A."/>
            <person name="Stiekema W."/>
            <person name="Entian K.-D."/>
            <person name="Terryn N."/>
            <person name="Harris B."/>
            <person name="Ansorge W."/>
            <person name="Brandt P."/>
            <person name="Grivell L.A."/>
            <person name="Rieger M."/>
            <person name="Weichselgartner M."/>
            <person name="de Simone V."/>
            <person name="Obermaier B."/>
            <person name="Mache R."/>
            <person name="Mueller M."/>
            <person name="Kreis M."/>
            <person name="Delseny M."/>
            <person name="Puigdomenech P."/>
            <person name="Watson M."/>
            <person name="Schmidtheini T."/>
            <person name="Reichert B."/>
            <person name="Portetelle D."/>
            <person name="Perez-Alonso M."/>
            <person name="Boutry M."/>
            <person name="Bancroft I."/>
            <person name="Vos P."/>
            <person name="Hoheisel J."/>
            <person name="Zimmermann W."/>
            <person name="Wedler H."/>
            <person name="Ridley P."/>
            <person name="Langham S.-A."/>
            <person name="McCullagh B."/>
            <person name="Bilham L."/>
            <person name="Robben J."/>
            <person name="van der Schueren J."/>
            <person name="Grymonprez B."/>
            <person name="Chuang Y.-J."/>
            <person name="Vandenbussche F."/>
            <person name="Braeken M."/>
            <person name="Weltjens I."/>
            <person name="Voet M."/>
            <person name="Bastiaens I."/>
            <person name="Aert R."/>
            <person name="Defoor E."/>
            <person name="Weitzenegger T."/>
            <person name="Bothe G."/>
            <person name="Ramsperger U."/>
            <person name="Hilbert H."/>
            <person name="Braun M."/>
            <person name="Holzer E."/>
            <person name="Brandt A."/>
            <person name="Peters S."/>
            <person name="van Staveren M."/>
            <person name="Dirkse W."/>
            <person name="Mooijman P."/>
            <person name="Klein Lankhorst R."/>
            <person name="Rose M."/>
            <person name="Hauf J."/>
            <person name="Koetter P."/>
            <person name="Berneiser S."/>
            <person name="Hempel S."/>
            <person name="Feldpausch M."/>
            <person name="Lamberth S."/>
            <person name="Van den Daele H."/>
            <person name="De Keyser A."/>
            <person name="Buysshaert C."/>
            <person name="Gielen J."/>
            <person name="Villarroel R."/>
            <person name="De Clercq R."/>
            <person name="van Montagu M."/>
            <person name="Rogers J."/>
            <person name="Cronin A."/>
            <person name="Quail M.A."/>
            <person name="Bray-Allen S."/>
            <person name="Clark L."/>
            <person name="Doggett J."/>
            <person name="Hall S."/>
            <person name="Kay M."/>
            <person name="Lennard N."/>
            <person name="McLay K."/>
            <person name="Mayes R."/>
            <person name="Pettett A."/>
            <person name="Rajandream M.A."/>
            <person name="Lyne M."/>
            <person name="Benes V."/>
            <person name="Rechmann S."/>
            <person name="Borkova D."/>
            <person name="Bloecker H."/>
            <person name="Scharfe M."/>
            <person name="Grimm M."/>
            <person name="Loehnert T.-H."/>
            <person name="Dose S."/>
            <person name="de Haan M."/>
            <person name="Maarse A.C."/>
            <person name="Schaefer M."/>
            <person name="Mueller-Auer S."/>
            <person name="Gabel C."/>
            <person name="Fuchs M."/>
            <person name="Fartmann B."/>
            <person name="Granderath K."/>
            <person name="Dauner D."/>
            <person name="Herzl A."/>
            <person name="Neumann S."/>
            <person name="Argiriou A."/>
            <person name="Vitale D."/>
            <person name="Liguori R."/>
            <person name="Piravandi E."/>
            <person name="Massenet O."/>
            <person name="Quigley F."/>
            <person name="Clabauld G."/>
            <person name="Muendlein A."/>
            <person name="Felber R."/>
            <person name="Schnabl S."/>
            <person name="Hiller R."/>
            <person name="Schmidt W."/>
            <person name="Lecharny A."/>
            <person name="Aubourg S."/>
            <person name="Chefdor F."/>
            <person name="Cooke R."/>
            <person name="Berger C."/>
            <person name="Monfort A."/>
            <person name="Casacuberta E."/>
            <person name="Gibbons T."/>
            <person name="Weber N."/>
            <person name="Vandenbol M."/>
            <person name="Bargues M."/>
            <person name="Terol J."/>
            <person name="Torres A."/>
            <person name="Perez-Perez A."/>
            <person name="Purnelle B."/>
            <person name="Bent E."/>
            <person name="Johnson S."/>
            <person name="Tacon D."/>
            <person name="Jesse T."/>
            <person name="Heijnen L."/>
            <person name="Schwarz S."/>
            <person name="Scholler P."/>
            <person name="Heber S."/>
            <person name="Francs P."/>
            <person name="Bielke C."/>
            <person name="Frishman D."/>
            <person name="Haase D."/>
            <person name="Lemcke K."/>
            <person name="Mewes H.-W."/>
            <person name="Stocker S."/>
            <person name="Zaccaria P."/>
            <person name="Bevan M."/>
            <person name="Wilson R.K."/>
            <person name="de la Bastide M."/>
            <person name="Habermann K."/>
            <person name="Parnell L."/>
            <person name="Dedhia N."/>
            <person name="Gnoj L."/>
            <person name="Schutz K."/>
            <person name="Huang E."/>
            <person name="Spiegel L."/>
            <person name="Sekhon M."/>
            <person name="Murray J."/>
            <person name="Sheet P."/>
            <person name="Cordes M."/>
            <person name="Abu-Threideh J."/>
            <person name="Stoneking T."/>
            <person name="Kalicki J."/>
            <person name="Graves T."/>
            <person name="Harmon G."/>
            <person name="Edwards J."/>
            <person name="Latreille P."/>
            <person name="Courtney L."/>
            <person name="Cloud J."/>
            <person name="Abbott A."/>
            <person name="Scott K."/>
            <person name="Johnson D."/>
            <person name="Minx P."/>
            <person name="Bentley D."/>
            <person name="Fulton B."/>
            <person name="Miller N."/>
            <person name="Greco T."/>
            <person name="Kemp K."/>
            <person name="Kramer J."/>
            <person name="Fulton L."/>
            <person name="Mardis E."/>
            <person name="Dante M."/>
            <person name="Pepin K."/>
            <person name="Hillier L.W."/>
            <person name="Nelson J."/>
            <person name="Spieth J."/>
            <person name="Ryan E."/>
            <person name="Andrews S."/>
            <person name="Geisel C."/>
            <person name="Layman D."/>
            <person name="Du H."/>
            <person name="Ali J."/>
            <person name="Berghoff A."/>
            <person name="Jones K."/>
            <person name="Drone K."/>
            <person name="Cotton M."/>
            <person name="Joshu C."/>
            <person name="Antonoiu B."/>
            <person name="Zidanic M."/>
            <person name="Strong C."/>
            <person name="Sun H."/>
            <person name="Lamar B."/>
            <person name="Yordan C."/>
            <person name="Ma P."/>
            <person name="Zhong J."/>
            <person name="Preston R."/>
            <person name="Vil D."/>
            <person name="Shekher M."/>
            <person name="Matero A."/>
            <person name="Shah R."/>
            <person name="Swaby I.K."/>
            <person name="O'Shaughnessy A."/>
            <person name="Rodriguez M."/>
            <person name="Hoffman J."/>
            <person name="Till S."/>
            <person name="Granat S."/>
            <person name="Shohdy N."/>
            <person name="Hasegawa A."/>
            <person name="Hameed A."/>
            <person name="Lodhi M."/>
            <person name="Johnson A."/>
            <person name="Chen E."/>
            <person name="Marra M.A."/>
            <person name="Martienssen R."/>
            <person name="McCombie W.R."/>
        </authorList>
    </citation>
    <scope>NUCLEOTIDE SEQUENCE [LARGE SCALE GENOMIC DNA]</scope>
    <source>
        <strain>cv. Columbia</strain>
    </source>
</reference>
<reference key="2">
    <citation type="journal article" date="2017" name="Plant J.">
        <title>Araport11: a complete reannotation of the Arabidopsis thaliana reference genome.</title>
        <authorList>
            <person name="Cheng C.Y."/>
            <person name="Krishnakumar V."/>
            <person name="Chan A.P."/>
            <person name="Thibaud-Nissen F."/>
            <person name="Schobel S."/>
            <person name="Town C.D."/>
        </authorList>
    </citation>
    <scope>GENOME REANNOTATION</scope>
    <source>
        <strain>cv. Columbia</strain>
    </source>
</reference>
<reference key="3">
    <citation type="journal article" date="2005" name="Plant Physiol.">
        <title>Genome organization of more than 300 defensin-like genes in Arabidopsis.</title>
        <authorList>
            <person name="Silverstein K.A.T."/>
            <person name="Graham M.A."/>
            <person name="Paape T.D."/>
            <person name="VandenBosch K.A."/>
        </authorList>
    </citation>
    <scope>GENE FAMILY</scope>
</reference>
<protein>
    <recommendedName>
        <fullName>Putative defensin-like protein 27</fullName>
    </recommendedName>
</protein>
<gene>
    <name type="ordered locus">At4g18823</name>
    <name type="ORF">F28A21</name>
</gene>
<keyword id="KW-0929">Antimicrobial</keyword>
<keyword id="KW-1015">Disulfide bond</keyword>
<keyword id="KW-0295">Fungicide</keyword>
<keyword id="KW-0611">Plant defense</keyword>
<keyword id="KW-1185">Reference proteome</keyword>
<keyword id="KW-0964">Secreted</keyword>
<keyword id="KW-0732">Signal</keyword>
<evidence type="ECO:0000250" key="1"/>
<evidence type="ECO:0000255" key="2"/>
<evidence type="ECO:0000305" key="3"/>
<feature type="signal peptide" evidence="2">
    <location>
        <begin position="1"/>
        <end position="19"/>
    </location>
</feature>
<feature type="chain" id="PRO_0000379609" description="Putative defensin-like protein 27">
    <location>
        <begin position="20"/>
        <end position="74"/>
    </location>
</feature>
<feature type="disulfide bond" evidence="1">
    <location>
        <begin position="36"/>
        <end position="74"/>
    </location>
</feature>
<feature type="disulfide bond" evidence="1">
    <location>
        <begin position="46"/>
        <end position="65"/>
    </location>
</feature>
<feature type="disulfide bond" evidence="1">
    <location>
        <begin position="51"/>
        <end position="70"/>
    </location>
</feature>
<feature type="disulfide bond" evidence="1">
    <location>
        <begin position="55"/>
        <end position="72"/>
    </location>
</feature>
<dbReference type="EMBL" id="AL035526">
    <property type="status" value="NOT_ANNOTATED_CDS"/>
    <property type="molecule type" value="Genomic_DNA"/>
</dbReference>
<dbReference type="EMBL" id="AL161549">
    <property type="status" value="NOT_ANNOTATED_CDS"/>
    <property type="molecule type" value="Genomic_DNA"/>
</dbReference>
<dbReference type="EMBL" id="CP002687">
    <property type="protein sequence ID" value="AEE84095.1"/>
    <property type="molecule type" value="Genomic_DNA"/>
</dbReference>
<dbReference type="RefSeq" id="NP_001031666.1">
    <property type="nucleotide sequence ID" value="NM_001036589.1"/>
</dbReference>
<dbReference type="STRING" id="3702.Q2L6T3"/>
<dbReference type="PaxDb" id="3702-AT4G18823.1"/>
<dbReference type="EnsemblPlants" id="AT4G18823.1">
    <property type="protein sequence ID" value="AT4G18823.1"/>
    <property type="gene ID" value="AT4G18823"/>
</dbReference>
<dbReference type="GeneID" id="3769848"/>
<dbReference type="Gramene" id="AT4G18823.1">
    <property type="protein sequence ID" value="AT4G18823.1"/>
    <property type="gene ID" value="AT4G18823"/>
</dbReference>
<dbReference type="KEGG" id="ath:AT4G18823"/>
<dbReference type="Araport" id="AT4G18823"/>
<dbReference type="TAIR" id="AT4G18823"/>
<dbReference type="HOGENOM" id="CLU_185732_0_0_1"/>
<dbReference type="InParanoid" id="Q2L6T3"/>
<dbReference type="OMA" id="CCNDHPE"/>
<dbReference type="OrthoDB" id="1096658at2759"/>
<dbReference type="PhylomeDB" id="Q2L6T3"/>
<dbReference type="PRO" id="PR:Q2L6T3"/>
<dbReference type="Proteomes" id="UP000006548">
    <property type="component" value="Chromosome 4"/>
</dbReference>
<dbReference type="ExpressionAtlas" id="Q2L6T3">
    <property type="expression patterns" value="baseline"/>
</dbReference>
<dbReference type="GO" id="GO:0005576">
    <property type="term" value="C:extracellular region"/>
    <property type="evidence" value="ECO:0007669"/>
    <property type="project" value="UniProtKB-SubCell"/>
</dbReference>
<dbReference type="GO" id="GO:0050832">
    <property type="term" value="P:defense response to fungus"/>
    <property type="evidence" value="ECO:0007669"/>
    <property type="project" value="UniProtKB-KW"/>
</dbReference>
<dbReference type="GO" id="GO:0031640">
    <property type="term" value="P:killing of cells of another organism"/>
    <property type="evidence" value="ECO:0007669"/>
    <property type="project" value="UniProtKB-KW"/>
</dbReference>
<dbReference type="InterPro" id="IPR022618">
    <property type="entry name" value="Defensin-like_20-28"/>
</dbReference>
<dbReference type="Pfam" id="PF10868">
    <property type="entry name" value="Defensin_like"/>
    <property type="match status" value="1"/>
</dbReference>
<organism>
    <name type="scientific">Arabidopsis thaliana</name>
    <name type="common">Mouse-ear cress</name>
    <dbReference type="NCBI Taxonomy" id="3702"/>
    <lineage>
        <taxon>Eukaryota</taxon>
        <taxon>Viridiplantae</taxon>
        <taxon>Streptophyta</taxon>
        <taxon>Embryophyta</taxon>
        <taxon>Tracheophyta</taxon>
        <taxon>Spermatophyta</taxon>
        <taxon>Magnoliopsida</taxon>
        <taxon>eudicotyledons</taxon>
        <taxon>Gunneridae</taxon>
        <taxon>Pentapetalae</taxon>
        <taxon>rosids</taxon>
        <taxon>malvids</taxon>
        <taxon>Brassicales</taxon>
        <taxon>Brassicaceae</taxon>
        <taxon>Camelineae</taxon>
        <taxon>Arabidopsis</taxon>
    </lineage>
</organism>
<proteinExistence type="inferred from homology"/>
<comment type="subcellular location">
    <subcellularLocation>
        <location evidence="1">Secreted</location>
    </subcellularLocation>
</comment>
<comment type="similarity">
    <text evidence="3">Belongs to the DEFL family.</text>
</comment>